<organism>
    <name type="scientific">Caldicellulosiruptor bescii (strain ATCC BAA-1888 / DSM 6725 / KCTC 15123 / Z-1320)</name>
    <name type="common">Anaerocellum thermophilum</name>
    <dbReference type="NCBI Taxonomy" id="521460"/>
    <lineage>
        <taxon>Bacteria</taxon>
        <taxon>Bacillati</taxon>
        <taxon>Bacillota</taxon>
        <taxon>Bacillota incertae sedis</taxon>
        <taxon>Caldicellulosiruptorales</taxon>
        <taxon>Caldicellulosiruptoraceae</taxon>
        <taxon>Caldicellulosiruptor</taxon>
    </lineage>
</organism>
<name>TRUA_CALBD</name>
<accession>B9MKC1</accession>
<evidence type="ECO:0000255" key="1">
    <source>
        <dbReference type="HAMAP-Rule" id="MF_00171"/>
    </source>
</evidence>
<protein>
    <recommendedName>
        <fullName evidence="1">tRNA pseudouridine synthase A</fullName>
        <ecNumber evidence="1">5.4.99.12</ecNumber>
    </recommendedName>
    <alternativeName>
        <fullName evidence="1">tRNA pseudouridine(38-40) synthase</fullName>
    </alternativeName>
    <alternativeName>
        <fullName evidence="1">tRNA pseudouridylate synthase I</fullName>
    </alternativeName>
    <alternativeName>
        <fullName evidence="1">tRNA-uridine isomerase I</fullName>
    </alternativeName>
</protein>
<feature type="chain" id="PRO_1000194526" description="tRNA pseudouridine synthase A">
    <location>
        <begin position="1"/>
        <end position="244"/>
    </location>
</feature>
<feature type="active site" description="Nucleophile" evidence="1">
    <location>
        <position position="52"/>
    </location>
</feature>
<feature type="binding site" evidence="1">
    <location>
        <position position="110"/>
    </location>
    <ligand>
        <name>substrate</name>
    </ligand>
</feature>
<sequence length="244" mass="27660">MRNILLTIEYDGTGYFGWQKQPNKKTIQGTIEEAIKKLTGEEVNLIGSGRTDRGVHALNQKANFKTSSKIPTDKFPLALNSVLPGDISIKDAVEAPLDFSARYSARQKTYKYLIYNKKSRPALLRNYAYYYPYQLDVDAMQRACEYFIGEYDFKSFCSADSEAKTTIRRVYNAYLTFENECIAIYITANGFLYNMARIIAGTILDVGAGKLKPMDIPLIIESKDRTKAGKTLPPWGLYLVDVVY</sequence>
<comment type="function">
    <text evidence="1">Formation of pseudouridine at positions 38, 39 and 40 in the anticodon stem and loop of transfer RNAs.</text>
</comment>
<comment type="catalytic activity">
    <reaction evidence="1">
        <text>uridine(38/39/40) in tRNA = pseudouridine(38/39/40) in tRNA</text>
        <dbReference type="Rhea" id="RHEA:22376"/>
        <dbReference type="Rhea" id="RHEA-COMP:10085"/>
        <dbReference type="Rhea" id="RHEA-COMP:10087"/>
        <dbReference type="ChEBI" id="CHEBI:65314"/>
        <dbReference type="ChEBI" id="CHEBI:65315"/>
        <dbReference type="EC" id="5.4.99.12"/>
    </reaction>
</comment>
<comment type="subunit">
    <text evidence="1">Homodimer.</text>
</comment>
<comment type="similarity">
    <text evidence="1">Belongs to the tRNA pseudouridine synthase TruA family.</text>
</comment>
<dbReference type="EC" id="5.4.99.12" evidence="1"/>
<dbReference type="EMBL" id="CP001393">
    <property type="protein sequence ID" value="ACM60779.1"/>
    <property type="molecule type" value="Genomic_DNA"/>
</dbReference>
<dbReference type="RefSeq" id="WP_015908110.1">
    <property type="nucleotide sequence ID" value="NC_012034.1"/>
</dbReference>
<dbReference type="SMR" id="B9MKC1"/>
<dbReference type="STRING" id="521460.Athe_1685"/>
<dbReference type="GeneID" id="31773035"/>
<dbReference type="KEGG" id="ate:Athe_1685"/>
<dbReference type="eggNOG" id="COG0101">
    <property type="taxonomic scope" value="Bacteria"/>
</dbReference>
<dbReference type="HOGENOM" id="CLU_014673_0_1_9"/>
<dbReference type="Proteomes" id="UP000007723">
    <property type="component" value="Chromosome"/>
</dbReference>
<dbReference type="GO" id="GO:0003723">
    <property type="term" value="F:RNA binding"/>
    <property type="evidence" value="ECO:0007669"/>
    <property type="project" value="InterPro"/>
</dbReference>
<dbReference type="GO" id="GO:0160147">
    <property type="term" value="F:tRNA pseudouridine(38-40) synthase activity"/>
    <property type="evidence" value="ECO:0007669"/>
    <property type="project" value="UniProtKB-EC"/>
</dbReference>
<dbReference type="GO" id="GO:0031119">
    <property type="term" value="P:tRNA pseudouridine synthesis"/>
    <property type="evidence" value="ECO:0007669"/>
    <property type="project" value="UniProtKB-UniRule"/>
</dbReference>
<dbReference type="CDD" id="cd02570">
    <property type="entry name" value="PseudoU_synth_EcTruA"/>
    <property type="match status" value="1"/>
</dbReference>
<dbReference type="FunFam" id="3.30.70.580:FF:000001">
    <property type="entry name" value="tRNA pseudouridine synthase A"/>
    <property type="match status" value="1"/>
</dbReference>
<dbReference type="Gene3D" id="3.30.70.660">
    <property type="entry name" value="Pseudouridine synthase I, catalytic domain, C-terminal subdomain"/>
    <property type="match status" value="1"/>
</dbReference>
<dbReference type="Gene3D" id="3.30.70.580">
    <property type="entry name" value="Pseudouridine synthase I, catalytic domain, N-terminal subdomain"/>
    <property type="match status" value="1"/>
</dbReference>
<dbReference type="HAMAP" id="MF_00171">
    <property type="entry name" value="TruA"/>
    <property type="match status" value="1"/>
</dbReference>
<dbReference type="InterPro" id="IPR020103">
    <property type="entry name" value="PsdUridine_synth_cat_dom_sf"/>
</dbReference>
<dbReference type="InterPro" id="IPR001406">
    <property type="entry name" value="PsdUridine_synth_TruA"/>
</dbReference>
<dbReference type="InterPro" id="IPR020097">
    <property type="entry name" value="PsdUridine_synth_TruA_a/b_dom"/>
</dbReference>
<dbReference type="InterPro" id="IPR020095">
    <property type="entry name" value="PsdUridine_synth_TruA_C"/>
</dbReference>
<dbReference type="InterPro" id="IPR020094">
    <property type="entry name" value="TruA/RsuA/RluB/E/F_N"/>
</dbReference>
<dbReference type="NCBIfam" id="TIGR00071">
    <property type="entry name" value="hisT_truA"/>
    <property type="match status" value="1"/>
</dbReference>
<dbReference type="PANTHER" id="PTHR11142">
    <property type="entry name" value="PSEUDOURIDYLATE SYNTHASE"/>
    <property type="match status" value="1"/>
</dbReference>
<dbReference type="PANTHER" id="PTHR11142:SF0">
    <property type="entry name" value="TRNA PSEUDOURIDINE SYNTHASE-LIKE 1"/>
    <property type="match status" value="1"/>
</dbReference>
<dbReference type="Pfam" id="PF01416">
    <property type="entry name" value="PseudoU_synth_1"/>
    <property type="match status" value="2"/>
</dbReference>
<dbReference type="PIRSF" id="PIRSF001430">
    <property type="entry name" value="tRNA_psdUrid_synth"/>
    <property type="match status" value="1"/>
</dbReference>
<dbReference type="SUPFAM" id="SSF55120">
    <property type="entry name" value="Pseudouridine synthase"/>
    <property type="match status" value="1"/>
</dbReference>
<gene>
    <name evidence="1" type="primary">truA</name>
    <name type="ordered locus">Athe_1685</name>
</gene>
<reference key="1">
    <citation type="submission" date="2009-01" db="EMBL/GenBank/DDBJ databases">
        <title>Complete sequence of chromosome of Caldicellulosiruptor becscii DSM 6725.</title>
        <authorList>
            <person name="Lucas S."/>
            <person name="Copeland A."/>
            <person name="Lapidus A."/>
            <person name="Glavina del Rio T."/>
            <person name="Tice H."/>
            <person name="Bruce D."/>
            <person name="Goodwin L."/>
            <person name="Pitluck S."/>
            <person name="Sims D."/>
            <person name="Meincke L."/>
            <person name="Brettin T."/>
            <person name="Detter J.C."/>
            <person name="Han C."/>
            <person name="Larimer F."/>
            <person name="Land M."/>
            <person name="Hauser L."/>
            <person name="Kyrpides N."/>
            <person name="Ovchinnikova G."/>
            <person name="Kataeva I."/>
            <person name="Adams M.W.W."/>
        </authorList>
    </citation>
    <scope>NUCLEOTIDE SEQUENCE [LARGE SCALE GENOMIC DNA]</scope>
    <source>
        <strain>ATCC BAA-1888 / DSM 6725 / KCTC 15123 / Z-1320</strain>
    </source>
</reference>
<proteinExistence type="inferred from homology"/>
<keyword id="KW-0413">Isomerase</keyword>
<keyword id="KW-0819">tRNA processing</keyword>